<proteinExistence type="inferred from homology"/>
<reference key="1">
    <citation type="journal article" date="2004" name="Nature">
        <title>Genome sequence of Silicibacter pomeroyi reveals adaptations to the marine environment.</title>
        <authorList>
            <person name="Moran M.A."/>
            <person name="Buchan A."/>
            <person name="Gonzalez J.M."/>
            <person name="Heidelberg J.F."/>
            <person name="Whitman W.B."/>
            <person name="Kiene R.P."/>
            <person name="Henriksen J.R."/>
            <person name="King G.M."/>
            <person name="Belas R."/>
            <person name="Fuqua C."/>
            <person name="Brinkac L.M."/>
            <person name="Lewis M."/>
            <person name="Johri S."/>
            <person name="Weaver B."/>
            <person name="Pai G."/>
            <person name="Eisen J.A."/>
            <person name="Rahe E."/>
            <person name="Sheldon W.M."/>
            <person name="Ye W."/>
            <person name="Miller T.R."/>
            <person name="Carlton J."/>
            <person name="Rasko D.A."/>
            <person name="Paulsen I.T."/>
            <person name="Ren Q."/>
            <person name="Daugherty S.C."/>
            <person name="DeBoy R.T."/>
            <person name="Dodson R.J."/>
            <person name="Durkin A.S."/>
            <person name="Madupu R."/>
            <person name="Nelson W.C."/>
            <person name="Sullivan S.A."/>
            <person name="Rosovitz M.J."/>
            <person name="Haft D.H."/>
            <person name="Selengut J."/>
            <person name="Ward N."/>
        </authorList>
    </citation>
    <scope>NUCLEOTIDE SEQUENCE [LARGE SCALE GENOMIC DNA]</scope>
    <source>
        <strain>ATCC 700808 / DSM 15171 / DSS-3</strain>
    </source>
</reference>
<reference key="2">
    <citation type="journal article" date="2014" name="Stand. Genomic Sci.">
        <title>An updated genome annotation for the model marine bacterium Ruegeria pomeroyi DSS-3.</title>
        <authorList>
            <person name="Rivers A.R."/>
            <person name="Smith C.B."/>
            <person name="Moran M.A."/>
        </authorList>
    </citation>
    <scope>GENOME REANNOTATION</scope>
    <source>
        <strain>ATCC 700808 / DSM 15171 / DSS-3</strain>
    </source>
</reference>
<sequence>MQVSVRDNNVDQALRALKKKLQREGVFREMKLKQHFEKPSEKKAREKAEAIRRARKLARKKAQREGML</sequence>
<gene>
    <name evidence="1" type="primary">rpsU</name>
    <name type="ordered locus">SPO0229</name>
</gene>
<feature type="chain" id="PRO_0000266767" description="Small ribosomal subunit protein bS21">
    <location>
        <begin position="1"/>
        <end position="68"/>
    </location>
</feature>
<comment type="similarity">
    <text evidence="1">Belongs to the bacterial ribosomal protein bS21 family.</text>
</comment>
<name>RS21_RUEPO</name>
<organism>
    <name type="scientific">Ruegeria pomeroyi (strain ATCC 700808 / DSM 15171 / DSS-3)</name>
    <name type="common">Silicibacter pomeroyi</name>
    <dbReference type="NCBI Taxonomy" id="246200"/>
    <lineage>
        <taxon>Bacteria</taxon>
        <taxon>Pseudomonadati</taxon>
        <taxon>Pseudomonadota</taxon>
        <taxon>Alphaproteobacteria</taxon>
        <taxon>Rhodobacterales</taxon>
        <taxon>Roseobacteraceae</taxon>
        <taxon>Ruegeria</taxon>
    </lineage>
</organism>
<keyword id="KW-1185">Reference proteome</keyword>
<keyword id="KW-0687">Ribonucleoprotein</keyword>
<keyword id="KW-0689">Ribosomal protein</keyword>
<protein>
    <recommendedName>
        <fullName evidence="1">Small ribosomal subunit protein bS21</fullName>
    </recommendedName>
    <alternativeName>
        <fullName evidence="2">30S ribosomal protein S21</fullName>
    </alternativeName>
</protein>
<accession>Q5LX29</accession>
<dbReference type="EMBL" id="CP000031">
    <property type="protein sequence ID" value="AAV93554.1"/>
    <property type="molecule type" value="Genomic_DNA"/>
</dbReference>
<dbReference type="RefSeq" id="WP_008207378.1">
    <property type="nucleotide sequence ID" value="NC_003911.12"/>
</dbReference>
<dbReference type="SMR" id="Q5LX29"/>
<dbReference type="STRING" id="246200.SPO0229"/>
<dbReference type="PaxDb" id="246200-SPO0229"/>
<dbReference type="DNASU" id="3196118"/>
<dbReference type="GeneID" id="62642273"/>
<dbReference type="KEGG" id="sil:SPO0229"/>
<dbReference type="eggNOG" id="COG0828">
    <property type="taxonomic scope" value="Bacteria"/>
</dbReference>
<dbReference type="HOGENOM" id="CLU_159258_0_1_5"/>
<dbReference type="OrthoDB" id="9811907at2"/>
<dbReference type="Proteomes" id="UP000001023">
    <property type="component" value="Chromosome"/>
</dbReference>
<dbReference type="GO" id="GO:1990904">
    <property type="term" value="C:ribonucleoprotein complex"/>
    <property type="evidence" value="ECO:0007669"/>
    <property type="project" value="UniProtKB-KW"/>
</dbReference>
<dbReference type="GO" id="GO:0005840">
    <property type="term" value="C:ribosome"/>
    <property type="evidence" value="ECO:0007669"/>
    <property type="project" value="UniProtKB-KW"/>
</dbReference>
<dbReference type="GO" id="GO:0003735">
    <property type="term" value="F:structural constituent of ribosome"/>
    <property type="evidence" value="ECO:0007669"/>
    <property type="project" value="InterPro"/>
</dbReference>
<dbReference type="GO" id="GO:0006412">
    <property type="term" value="P:translation"/>
    <property type="evidence" value="ECO:0007669"/>
    <property type="project" value="UniProtKB-UniRule"/>
</dbReference>
<dbReference type="Gene3D" id="1.20.5.1150">
    <property type="entry name" value="Ribosomal protein S8"/>
    <property type="match status" value="1"/>
</dbReference>
<dbReference type="HAMAP" id="MF_00358">
    <property type="entry name" value="Ribosomal_bS21"/>
    <property type="match status" value="1"/>
</dbReference>
<dbReference type="InterPro" id="IPR001911">
    <property type="entry name" value="Ribosomal_bS21"/>
</dbReference>
<dbReference type="InterPro" id="IPR018278">
    <property type="entry name" value="Ribosomal_bS21_CS"/>
</dbReference>
<dbReference type="InterPro" id="IPR038380">
    <property type="entry name" value="Ribosomal_bS21_sf"/>
</dbReference>
<dbReference type="NCBIfam" id="TIGR00030">
    <property type="entry name" value="S21p"/>
    <property type="match status" value="1"/>
</dbReference>
<dbReference type="PANTHER" id="PTHR21109">
    <property type="entry name" value="MITOCHONDRIAL 28S RIBOSOMAL PROTEIN S21"/>
    <property type="match status" value="1"/>
</dbReference>
<dbReference type="PANTHER" id="PTHR21109:SF0">
    <property type="entry name" value="SMALL RIBOSOMAL SUBUNIT PROTEIN BS21M"/>
    <property type="match status" value="1"/>
</dbReference>
<dbReference type="Pfam" id="PF01165">
    <property type="entry name" value="Ribosomal_S21"/>
    <property type="match status" value="1"/>
</dbReference>
<dbReference type="PROSITE" id="PS01181">
    <property type="entry name" value="RIBOSOMAL_S21"/>
    <property type="match status" value="1"/>
</dbReference>
<evidence type="ECO:0000255" key="1">
    <source>
        <dbReference type="HAMAP-Rule" id="MF_00358"/>
    </source>
</evidence>
<evidence type="ECO:0000305" key="2"/>